<sequence length="949" mass="103991">MAGTMHLLTAVSLILMLSSANAESTVYNLLTSPDCLPDLLHGGLAEQGVTELYILTTFRIQPGTGNTIFSLYNPRDNSKYFEFSVFGKANKAILRYLRRDGRMSAVTFNKLNLADGEKHRLLFHLKGLEVGHPGGFPHSQGALPVPGVELHLDCRLVETLRDLPAVFNGLNNHQAVELKTMQGKAQEGLEELKLAYGDSVENVASLQDCHTQSDSVQALGLNTKQLTTQMLELTKVINELKDVLIQQVKETSFLRNTISECQACGLSGAEVVKPKCAPGVCFRDDMCIETAEGVECGPCPDGYTGDGYSCDDVDECQFNPCFPGVRCVNMAPGFRCEACPLGFTGKPLEGVGVAYAQTHKQVCDDIDECKGPDNGGCTANSICVNSVGSYQCGRCKTGFTGDQIRGCKPEKSCGNRLQNPCDPNAQCTEERDGTITCQCGIGWAGNGYLCGKDTDIDGYPDERLRCRDPTCRKDNCVTVPNSGQEDADGDGKGDACDPDADGDGILNEQDNCWLTPNINQQNSDKDSHGDACDNCVRVDNPDQRDTDSDGLGDACDDDMDGDGLKNFLDNCQRVKNRDQLDRDGDGVGDACDSCPDIPNPNQSDIDNDLVGDSCDTNQDSDGDGHQDSKDNCPMVINSSQLDTDKDGIGDECDDDDDNDGIPDSLPPGPDNCRLVPNPEQIDDNNDGVGDICESDFDQDKVIDRIDNCPENAEITLTDFRAYQTVVLDPEGDAQIDPNWVVLNQGMEIVQTMNSDPGLAVGYTAFSGVDFEGTFHVNTVTDDDYAGFIFGYQDSSSFYVVMWKQTEQTYWQATPFRAVAEPGIQLKAVKSKTGPGEHLRNSLWHTGDTNDQVRLLWKDPRNVGWKDKVSYRWYLQHRPQVGYIRVRFYEGTELVADSGVTIDTTMRGGRLGVFCFSQENIIWSNLKYRCNDTIPEDFQEFSTQHGMDPL</sequence>
<protein>
    <recommendedName>
        <fullName>Thrombospondin-4-B</fullName>
        <shortName>Thbs4-B</shortName>
    </recommendedName>
</protein>
<dbReference type="EMBL" id="AY081009">
    <property type="protein sequence ID" value="AAL82733.1"/>
    <property type="molecule type" value="mRNA"/>
</dbReference>
<dbReference type="RefSeq" id="NP_775333.1">
    <property type="nucleotide sequence ID" value="NM_173226.1"/>
</dbReference>
<dbReference type="SMR" id="Q8JGW0"/>
<dbReference type="FunCoup" id="Q8JGW0">
    <property type="interactions" value="1785"/>
</dbReference>
<dbReference type="STRING" id="7955.ENSDARP00000093348"/>
<dbReference type="GlyCosmos" id="Q8JGW0">
    <property type="glycosylation" value="3 sites, No reported glycans"/>
</dbReference>
<dbReference type="PaxDb" id="7955-ENSDARP00000093348"/>
<dbReference type="GeneID" id="252850"/>
<dbReference type="KEGG" id="dre:252850"/>
<dbReference type="AGR" id="ZFIN:ZDB-GENE-020708-4"/>
<dbReference type="CTD" id="252850"/>
<dbReference type="ZFIN" id="ZDB-GENE-020708-4">
    <property type="gene designation" value="thbs4b"/>
</dbReference>
<dbReference type="eggNOG" id="ENOG502QRK8">
    <property type="taxonomic scope" value="Eukaryota"/>
</dbReference>
<dbReference type="InParanoid" id="Q8JGW0"/>
<dbReference type="OrthoDB" id="14563at2759"/>
<dbReference type="PhylomeDB" id="Q8JGW0"/>
<dbReference type="PRO" id="PR:Q8JGW0"/>
<dbReference type="Proteomes" id="UP000000437">
    <property type="component" value="Chromosome 21"/>
</dbReference>
<dbReference type="GO" id="GO:0062023">
    <property type="term" value="C:collagen-containing extracellular matrix"/>
    <property type="evidence" value="ECO:0000250"/>
    <property type="project" value="UniProtKB"/>
</dbReference>
<dbReference type="GO" id="GO:0005783">
    <property type="term" value="C:endoplasmic reticulum"/>
    <property type="evidence" value="ECO:0000250"/>
    <property type="project" value="UniProtKB"/>
</dbReference>
<dbReference type="GO" id="GO:0005576">
    <property type="term" value="C:extracellular region"/>
    <property type="evidence" value="ECO:0000303"/>
    <property type="project" value="UniProtKB"/>
</dbReference>
<dbReference type="GO" id="GO:0005615">
    <property type="term" value="C:extracellular space"/>
    <property type="evidence" value="ECO:0000250"/>
    <property type="project" value="UniProtKB"/>
</dbReference>
<dbReference type="GO" id="GO:0016529">
    <property type="term" value="C:sarcoplasmic reticulum"/>
    <property type="evidence" value="ECO:0000250"/>
    <property type="project" value="UniProtKB"/>
</dbReference>
<dbReference type="GO" id="GO:0005509">
    <property type="term" value="F:calcium ion binding"/>
    <property type="evidence" value="ECO:0007669"/>
    <property type="project" value="InterPro"/>
</dbReference>
<dbReference type="GO" id="GO:0008083">
    <property type="term" value="F:growth factor activity"/>
    <property type="evidence" value="ECO:0007669"/>
    <property type="project" value="UniProtKB-KW"/>
</dbReference>
<dbReference type="GO" id="GO:0008201">
    <property type="term" value="F:heparin binding"/>
    <property type="evidence" value="ECO:0000303"/>
    <property type="project" value="UniProtKB"/>
</dbReference>
<dbReference type="GO" id="GO:0007155">
    <property type="term" value="P:cell adhesion"/>
    <property type="evidence" value="ECO:0007669"/>
    <property type="project" value="UniProtKB-KW"/>
</dbReference>
<dbReference type="GO" id="GO:0051781">
    <property type="term" value="P:positive regulation of cell division"/>
    <property type="evidence" value="ECO:0007669"/>
    <property type="project" value="UniProtKB-KW"/>
</dbReference>
<dbReference type="GO" id="GO:0006986">
    <property type="term" value="P:response to unfolded protein"/>
    <property type="evidence" value="ECO:0007669"/>
    <property type="project" value="UniProtKB-KW"/>
</dbReference>
<dbReference type="GO" id="GO:0035989">
    <property type="term" value="P:tendon development"/>
    <property type="evidence" value="ECO:0000315"/>
    <property type="project" value="ZFIN"/>
</dbReference>
<dbReference type="CDD" id="cd00054">
    <property type="entry name" value="EGF_CA"/>
    <property type="match status" value="2"/>
</dbReference>
<dbReference type="FunFam" id="4.10.1080.10:FF:000004">
    <property type="entry name" value="Cartilage oligomeric matrix protein"/>
    <property type="match status" value="1"/>
</dbReference>
<dbReference type="FunFam" id="2.10.25.10:FF:000025">
    <property type="entry name" value="Thrombospondin 3"/>
    <property type="match status" value="1"/>
</dbReference>
<dbReference type="FunFam" id="2.10.25.10:FF:000027">
    <property type="entry name" value="Thrombospondin 3"/>
    <property type="match status" value="1"/>
</dbReference>
<dbReference type="FunFam" id="2.60.120.200:FF:000002">
    <property type="entry name" value="Thrombospondin 3"/>
    <property type="match status" value="1"/>
</dbReference>
<dbReference type="FunFam" id="4.10.1080.10:FF:000001">
    <property type="entry name" value="Thrombospondin 3"/>
    <property type="match status" value="1"/>
</dbReference>
<dbReference type="FunFam" id="2.60.120.200:FF:000123">
    <property type="entry name" value="Thrombospondin 4"/>
    <property type="match status" value="1"/>
</dbReference>
<dbReference type="FunFam" id="2.10.25.10:FF:000170">
    <property type="entry name" value="thrombospondin-3 isoform X1"/>
    <property type="match status" value="1"/>
</dbReference>
<dbReference type="FunFam" id="1.20.5.10:FF:000001">
    <property type="entry name" value="thrombospondin-3 isoform X2"/>
    <property type="match status" value="1"/>
</dbReference>
<dbReference type="Gene3D" id="1.20.5.10">
    <property type="match status" value="1"/>
</dbReference>
<dbReference type="Gene3D" id="2.60.120.200">
    <property type="match status" value="2"/>
</dbReference>
<dbReference type="Gene3D" id="2.10.25.10">
    <property type="entry name" value="Laminin"/>
    <property type="match status" value="4"/>
</dbReference>
<dbReference type="Gene3D" id="4.10.1080.10">
    <property type="entry name" value="TSP type-3 repeat"/>
    <property type="match status" value="2"/>
</dbReference>
<dbReference type="InterPro" id="IPR013320">
    <property type="entry name" value="ConA-like_dom_sf"/>
</dbReference>
<dbReference type="InterPro" id="IPR001881">
    <property type="entry name" value="EGF-like_Ca-bd_dom"/>
</dbReference>
<dbReference type="InterPro" id="IPR000742">
    <property type="entry name" value="EGF-like_dom"/>
</dbReference>
<dbReference type="InterPro" id="IPR018097">
    <property type="entry name" value="EGF_Ca-bd_CS"/>
</dbReference>
<dbReference type="InterPro" id="IPR049883">
    <property type="entry name" value="NOTCH1_EGF-like"/>
</dbReference>
<dbReference type="InterPro" id="IPR003367">
    <property type="entry name" value="Thrombospondin_3-like_rpt"/>
</dbReference>
<dbReference type="InterPro" id="IPR017897">
    <property type="entry name" value="Thrombospondin_3_rpt"/>
</dbReference>
<dbReference type="InterPro" id="IPR008859">
    <property type="entry name" value="Thrombospondin_C"/>
</dbReference>
<dbReference type="InterPro" id="IPR024665">
    <property type="entry name" value="TSP/COMP_coiled-coil"/>
</dbReference>
<dbReference type="InterPro" id="IPR046970">
    <property type="entry name" value="TSP/COMP_coiled-coil_sf"/>
</dbReference>
<dbReference type="InterPro" id="IPR028974">
    <property type="entry name" value="TSP_type-3_rpt"/>
</dbReference>
<dbReference type="InterPro" id="IPR048287">
    <property type="entry name" value="TSPN-like_N"/>
</dbReference>
<dbReference type="PANTHER" id="PTHR10199">
    <property type="entry name" value="THROMBOSPONDIN"/>
    <property type="match status" value="1"/>
</dbReference>
<dbReference type="PANTHER" id="PTHR10199:SF92">
    <property type="entry name" value="THROMBOSPONDIN-4"/>
    <property type="match status" value="1"/>
</dbReference>
<dbReference type="Pfam" id="PF11598">
    <property type="entry name" value="COMP"/>
    <property type="match status" value="1"/>
</dbReference>
<dbReference type="Pfam" id="PF07645">
    <property type="entry name" value="EGF_CA"/>
    <property type="match status" value="2"/>
</dbReference>
<dbReference type="Pfam" id="PF02412">
    <property type="entry name" value="TSP_3"/>
    <property type="match status" value="6"/>
</dbReference>
<dbReference type="Pfam" id="PF05735">
    <property type="entry name" value="TSP_C"/>
    <property type="match status" value="1"/>
</dbReference>
<dbReference type="SMART" id="SM00181">
    <property type="entry name" value="EGF"/>
    <property type="match status" value="4"/>
</dbReference>
<dbReference type="SMART" id="SM00179">
    <property type="entry name" value="EGF_CA"/>
    <property type="match status" value="2"/>
</dbReference>
<dbReference type="SMART" id="SM00210">
    <property type="entry name" value="TSPN"/>
    <property type="match status" value="1"/>
</dbReference>
<dbReference type="SUPFAM" id="SSF58006">
    <property type="entry name" value="Assembly domain of cartilage oligomeric matrix protein"/>
    <property type="match status" value="1"/>
</dbReference>
<dbReference type="SUPFAM" id="SSF49899">
    <property type="entry name" value="Concanavalin A-like lectins/glucanases"/>
    <property type="match status" value="2"/>
</dbReference>
<dbReference type="SUPFAM" id="SSF57196">
    <property type="entry name" value="EGF/Laminin"/>
    <property type="match status" value="1"/>
</dbReference>
<dbReference type="SUPFAM" id="SSF103647">
    <property type="entry name" value="TSP type-3 repeat"/>
    <property type="match status" value="3"/>
</dbReference>
<dbReference type="PROSITE" id="PS01186">
    <property type="entry name" value="EGF_2"/>
    <property type="match status" value="1"/>
</dbReference>
<dbReference type="PROSITE" id="PS50026">
    <property type="entry name" value="EGF_3"/>
    <property type="match status" value="3"/>
</dbReference>
<dbReference type="PROSITE" id="PS01187">
    <property type="entry name" value="EGF_CA"/>
    <property type="match status" value="2"/>
</dbReference>
<dbReference type="PROSITE" id="PS51234">
    <property type="entry name" value="TSP3"/>
    <property type="match status" value="8"/>
</dbReference>
<dbReference type="PROSITE" id="PS51236">
    <property type="entry name" value="TSP_CTER"/>
    <property type="match status" value="1"/>
</dbReference>
<keyword id="KW-0106">Calcium</keyword>
<keyword id="KW-0130">Cell adhesion</keyword>
<keyword id="KW-1015">Disulfide bond</keyword>
<keyword id="KW-0245">EGF-like domain</keyword>
<keyword id="KW-0256">Endoplasmic reticulum</keyword>
<keyword id="KW-0272">Extracellular matrix</keyword>
<keyword id="KW-0325">Glycoprotein</keyword>
<keyword id="KW-0339">Growth factor</keyword>
<keyword id="KW-0497">Mitogen</keyword>
<keyword id="KW-1185">Reference proteome</keyword>
<keyword id="KW-0677">Repeat</keyword>
<keyword id="KW-0703">Sarcoplasmic reticulum</keyword>
<keyword id="KW-0964">Secreted</keyword>
<keyword id="KW-0732">Signal</keyword>
<keyword id="KW-0834">Unfolded protein response</keyword>
<accession>Q8JGW0</accession>
<evidence type="ECO:0000250" key="1"/>
<evidence type="ECO:0000250" key="2">
    <source>
        <dbReference type="UniProtKB" id="P35442"/>
    </source>
</evidence>
<evidence type="ECO:0000250" key="3">
    <source>
        <dbReference type="UniProtKB" id="P35443"/>
    </source>
</evidence>
<evidence type="ECO:0000250" key="4">
    <source>
        <dbReference type="UniProtKB" id="Q9R0G6"/>
    </source>
</evidence>
<evidence type="ECO:0000255" key="5"/>
<evidence type="ECO:0000255" key="6">
    <source>
        <dbReference type="PROSITE-ProRule" id="PRU00076"/>
    </source>
</evidence>
<evidence type="ECO:0000255" key="7">
    <source>
        <dbReference type="PROSITE-ProRule" id="PRU00635"/>
    </source>
</evidence>
<evidence type="ECO:0000256" key="8">
    <source>
        <dbReference type="SAM" id="MobiDB-lite"/>
    </source>
</evidence>
<evidence type="ECO:0000269" key="9">
    <source>
    </source>
</evidence>
<evidence type="ECO:0000305" key="10"/>
<evidence type="ECO:0000312" key="11">
    <source>
        <dbReference type="EMBL" id="AAL82733.1"/>
    </source>
</evidence>
<gene>
    <name type="primary">thbs4b</name>
    <name type="synonym">thbs4</name>
    <name type="synonym">tsp4</name>
</gene>
<comment type="function">
    <text evidence="1">Adhesive glycoprotein that mediates cell-to-cell and cell-to-matrix interactions and may be involved in various processes including cellular proliferation, migration, adhesion and attachment. May play a role in ER stress response (By similarity).</text>
</comment>
<comment type="subunit">
    <text evidence="3">Homotrimer; disulfide-linked.</text>
</comment>
<comment type="subcellular location">
    <subcellularLocation>
        <location evidence="1">Endoplasmic reticulum</location>
    </subcellularLocation>
    <subcellularLocation>
        <location evidence="1">Sarcoplasmic reticulum</location>
    </subcellularLocation>
    <subcellularLocation>
        <location evidence="1">Secreted</location>
    </subcellularLocation>
    <subcellularLocation>
        <location evidence="1">Secreted</location>
        <location evidence="1">Extracellular space</location>
    </subcellularLocation>
    <subcellularLocation>
        <location evidence="1">Secreted</location>
        <location evidence="1">Extracellular space</location>
        <location evidence="1">Extracellular matrix</location>
    </subcellularLocation>
</comment>
<comment type="developmental stage">
    <text evidence="9">Expressed both maternally and zygotically. Present at the gastrulation and post-segmentation stages.</text>
</comment>
<comment type="similarity">
    <text evidence="10">Belongs to the thrombospondin family.</text>
</comment>
<proteinExistence type="evidence at transcript level"/>
<organism evidence="11">
    <name type="scientific">Danio rerio</name>
    <name type="common">Zebrafish</name>
    <name type="synonym">Brachydanio rerio</name>
    <dbReference type="NCBI Taxonomy" id="7955"/>
    <lineage>
        <taxon>Eukaryota</taxon>
        <taxon>Metazoa</taxon>
        <taxon>Chordata</taxon>
        <taxon>Craniata</taxon>
        <taxon>Vertebrata</taxon>
        <taxon>Euteleostomi</taxon>
        <taxon>Actinopterygii</taxon>
        <taxon>Neopterygii</taxon>
        <taxon>Teleostei</taxon>
        <taxon>Ostariophysi</taxon>
        <taxon>Cypriniformes</taxon>
        <taxon>Danionidae</taxon>
        <taxon>Danioninae</taxon>
        <taxon>Danio</taxon>
    </lineage>
</organism>
<name>TSP4B_DANRE</name>
<feature type="signal peptide" evidence="5">
    <location>
        <begin position="1"/>
        <end position="22"/>
    </location>
</feature>
<feature type="chain" id="PRO_0000035855" description="Thrombospondin-4-B">
    <location>
        <begin position="23"/>
        <end position="949"/>
    </location>
</feature>
<feature type="domain" description="Laminin G-like">
    <location>
        <begin position="23"/>
        <end position="198"/>
    </location>
</feature>
<feature type="domain" description="EGF-like 1; calcium-binding" evidence="6">
    <location>
        <begin position="312"/>
        <end position="349"/>
    </location>
</feature>
<feature type="domain" description="EGF-like 2; calcium-binding" evidence="6">
    <location>
        <begin position="365"/>
        <end position="408"/>
    </location>
</feature>
<feature type="domain" description="EGF-like 3" evidence="6">
    <location>
        <begin position="409"/>
        <end position="451"/>
    </location>
</feature>
<feature type="repeat" description="TSP type-3 1">
    <location>
        <begin position="452"/>
        <end position="484"/>
    </location>
</feature>
<feature type="repeat" description="TSP type-3 2">
    <location>
        <begin position="485"/>
        <end position="520"/>
    </location>
</feature>
<feature type="repeat" description="TSP type-3 3">
    <location>
        <begin position="521"/>
        <end position="543"/>
    </location>
</feature>
<feature type="repeat" description="TSP type-3 4">
    <location>
        <begin position="544"/>
        <end position="579"/>
    </location>
</feature>
<feature type="repeat" description="TSP type-3 5">
    <location>
        <begin position="580"/>
        <end position="602"/>
    </location>
</feature>
<feature type="repeat" description="TSP type-3 6">
    <location>
        <begin position="603"/>
        <end position="640"/>
    </location>
</feature>
<feature type="repeat" description="TSP type-3 7">
    <location>
        <begin position="641"/>
        <end position="680"/>
    </location>
</feature>
<feature type="repeat" description="TSP type-3 8">
    <location>
        <begin position="681"/>
        <end position="716"/>
    </location>
</feature>
<feature type="domain" description="TSP C-terminal" evidence="7">
    <location>
        <begin position="720"/>
        <end position="934"/>
    </location>
</feature>
<feature type="region of interest" description="Disordered" evidence="8">
    <location>
        <begin position="578"/>
        <end position="671"/>
    </location>
</feature>
<feature type="compositionally biased region" description="Acidic residues" evidence="8">
    <location>
        <begin position="649"/>
        <end position="660"/>
    </location>
</feature>
<feature type="glycosylation site" description="N-linked (GlcNAc...) asparagine" evidence="10">
    <location>
        <position position="601"/>
    </location>
</feature>
<feature type="glycosylation site" description="N-linked (GlcNAc...) asparagine" evidence="10">
    <location>
        <position position="637"/>
    </location>
</feature>
<feature type="glycosylation site" description="N-linked (GlcNAc...) asparagine" evidence="10">
    <location>
        <position position="930"/>
    </location>
</feature>
<feature type="disulfide bond" description="Interchain" evidence="4 6">
    <location>
        <position position="261"/>
    </location>
</feature>
<feature type="disulfide bond" description="Interchain" evidence="4 6">
    <location>
        <position position="264"/>
    </location>
</feature>
<feature type="disulfide bond" evidence="3 6">
    <location>
        <begin position="276"/>
        <end position="287"/>
    </location>
</feature>
<feature type="disulfide bond" evidence="3 6">
    <location>
        <begin position="281"/>
        <end position="296"/>
    </location>
</feature>
<feature type="disulfide bond" evidence="3 6">
    <location>
        <begin position="299"/>
        <end position="310"/>
    </location>
</feature>
<feature type="disulfide bond" evidence="3 6">
    <location>
        <begin position="316"/>
        <end position="327"/>
    </location>
</feature>
<feature type="disulfide bond" evidence="3 6">
    <location>
        <begin position="321"/>
        <end position="336"/>
    </location>
</feature>
<feature type="disulfide bond" evidence="3 6">
    <location>
        <begin position="339"/>
        <end position="363"/>
    </location>
</feature>
<feature type="disulfide bond" evidence="3 6">
    <location>
        <begin position="369"/>
        <end position="383"/>
    </location>
</feature>
<feature type="disulfide bond" evidence="3 6">
    <location>
        <begin position="377"/>
        <end position="392"/>
    </location>
</feature>
<feature type="disulfide bond" evidence="3 6">
    <location>
        <begin position="395"/>
        <end position="407"/>
    </location>
</feature>
<feature type="disulfide bond" evidence="3 6">
    <location>
        <begin position="413"/>
        <end position="427"/>
    </location>
</feature>
<feature type="disulfide bond" evidence="3 6">
    <location>
        <begin position="421"/>
        <end position="437"/>
    </location>
</feature>
<feature type="disulfide bond" evidence="3 6">
    <location>
        <begin position="439"/>
        <end position="450"/>
    </location>
</feature>
<feature type="disulfide bond" evidence="2 6">
    <location>
        <begin position="466"/>
        <end position="471"/>
    </location>
</feature>
<feature type="disulfide bond" evidence="2 6">
    <location>
        <begin position="476"/>
        <end position="496"/>
    </location>
</feature>
<feature type="disulfide bond" evidence="2 6">
    <location>
        <begin position="512"/>
        <end position="532"/>
    </location>
</feature>
<feature type="disulfide bond" evidence="2 6">
    <location>
        <begin position="535"/>
        <end position="555"/>
    </location>
</feature>
<feature type="disulfide bond" evidence="2 6">
    <location>
        <begin position="571"/>
        <end position="591"/>
    </location>
</feature>
<feature type="disulfide bond" evidence="2 6">
    <location>
        <begin position="594"/>
        <end position="614"/>
    </location>
</feature>
<feature type="disulfide bond" evidence="2 6">
    <location>
        <begin position="632"/>
        <end position="652"/>
    </location>
</feature>
<feature type="disulfide bond" evidence="2 6">
    <location>
        <begin position="672"/>
        <end position="692"/>
    </location>
</feature>
<feature type="disulfide bond" evidence="2 6">
    <location>
        <begin position="708"/>
        <end position="929"/>
    </location>
</feature>
<reference evidence="10" key="1">
    <citation type="journal article" date="2002" name="DNA Seq.">
        <title>The zebrafish thrombospondin 3 and 4 genes (thbs3 and thbs4): cDNA and protein structure.</title>
        <authorList>
            <person name="Adolph K.W."/>
        </authorList>
    </citation>
    <scope>NUCLEOTIDE SEQUENCE [MRNA]</scope>
    <scope>DEVELOPMENTAL STAGE</scope>
</reference>